<gene>
    <name evidence="1" type="primary">bioF</name>
    <name type="ordered locus">PSPTO_0495</name>
    <name type="ORF">PSPTO0495</name>
</gene>
<reference key="1">
    <citation type="journal article" date="2003" name="Proc. Natl. Acad. Sci. U.S.A.">
        <title>The complete genome sequence of the Arabidopsis and tomato pathogen Pseudomonas syringae pv. tomato DC3000.</title>
        <authorList>
            <person name="Buell C.R."/>
            <person name="Joardar V."/>
            <person name="Lindeberg M."/>
            <person name="Selengut J."/>
            <person name="Paulsen I.T."/>
            <person name="Gwinn M.L."/>
            <person name="Dodson R.J."/>
            <person name="DeBoy R.T."/>
            <person name="Durkin A.S."/>
            <person name="Kolonay J.F."/>
            <person name="Madupu R."/>
            <person name="Daugherty S.C."/>
            <person name="Brinkac L.M."/>
            <person name="Beanan M.J."/>
            <person name="Haft D.H."/>
            <person name="Nelson W.C."/>
            <person name="Davidsen T.M."/>
            <person name="Zafar N."/>
            <person name="Zhou L."/>
            <person name="Liu J."/>
            <person name="Yuan Q."/>
            <person name="Khouri H.M."/>
            <person name="Fedorova N.B."/>
            <person name="Tran B."/>
            <person name="Russell D."/>
            <person name="Berry K.J."/>
            <person name="Utterback T.R."/>
            <person name="Van Aken S.E."/>
            <person name="Feldblyum T.V."/>
            <person name="D'Ascenzo M."/>
            <person name="Deng W.-L."/>
            <person name="Ramos A.R."/>
            <person name="Alfano J.R."/>
            <person name="Cartinhour S."/>
            <person name="Chatterjee A.K."/>
            <person name="Delaney T.P."/>
            <person name="Lazarowitz S.G."/>
            <person name="Martin G.B."/>
            <person name="Schneider D.J."/>
            <person name="Tang X."/>
            <person name="Bender C.L."/>
            <person name="White O."/>
            <person name="Fraser C.M."/>
            <person name="Collmer A."/>
        </authorList>
    </citation>
    <scope>NUCLEOTIDE SEQUENCE [LARGE SCALE GENOMIC DNA]</scope>
    <source>
        <strain>ATCC BAA-871 / DC3000</strain>
    </source>
</reference>
<keyword id="KW-0093">Biotin biosynthesis</keyword>
<keyword id="KW-0663">Pyridoxal phosphate</keyword>
<keyword id="KW-1185">Reference proteome</keyword>
<keyword id="KW-0808">Transferase</keyword>
<comment type="function">
    <text evidence="1">Catalyzes the decarboxylative condensation of pimeloyl-[acyl-carrier protein] and L-alanine to produce 8-amino-7-oxononanoate (AON), [acyl-carrier protein], and carbon dioxide.</text>
</comment>
<comment type="catalytic activity">
    <reaction evidence="1">
        <text>6-carboxyhexanoyl-[ACP] + L-alanine + H(+) = (8S)-8-amino-7-oxononanoate + holo-[ACP] + CO2</text>
        <dbReference type="Rhea" id="RHEA:42288"/>
        <dbReference type="Rhea" id="RHEA-COMP:9685"/>
        <dbReference type="Rhea" id="RHEA-COMP:9955"/>
        <dbReference type="ChEBI" id="CHEBI:15378"/>
        <dbReference type="ChEBI" id="CHEBI:16526"/>
        <dbReference type="ChEBI" id="CHEBI:57972"/>
        <dbReference type="ChEBI" id="CHEBI:64479"/>
        <dbReference type="ChEBI" id="CHEBI:78846"/>
        <dbReference type="ChEBI" id="CHEBI:149468"/>
        <dbReference type="EC" id="2.3.1.47"/>
    </reaction>
</comment>
<comment type="cofactor">
    <cofactor evidence="1">
        <name>pyridoxal 5'-phosphate</name>
        <dbReference type="ChEBI" id="CHEBI:597326"/>
    </cofactor>
</comment>
<comment type="pathway">
    <text evidence="1">Cofactor biosynthesis; biotin biosynthesis.</text>
</comment>
<comment type="subunit">
    <text evidence="1">Homodimer.</text>
</comment>
<comment type="similarity">
    <text evidence="1">Belongs to the class-II pyridoxal-phosphate-dependent aminotransferase family. BioF subfamily.</text>
</comment>
<protein>
    <recommendedName>
        <fullName evidence="1">8-amino-7-oxononanoate synthase</fullName>
        <shortName evidence="1">AONS</shortName>
        <ecNumber evidence="1">2.3.1.47</ecNumber>
    </recommendedName>
    <alternativeName>
        <fullName evidence="1">7-keto-8-amino-pelargonic acid synthase</fullName>
        <shortName evidence="1">7-KAP synthase</shortName>
        <shortName evidence="1">KAPA synthase</shortName>
    </alternativeName>
    <alternativeName>
        <fullName evidence="1">8-amino-7-ketopelargonate synthase</fullName>
    </alternativeName>
</protein>
<dbReference type="EC" id="2.3.1.47" evidence="1"/>
<dbReference type="EMBL" id="AE016853">
    <property type="protein sequence ID" value="AAO54039.1"/>
    <property type="molecule type" value="Genomic_DNA"/>
</dbReference>
<dbReference type="RefSeq" id="NP_790344.1">
    <property type="nucleotide sequence ID" value="NC_004578.1"/>
</dbReference>
<dbReference type="RefSeq" id="WP_011103160.1">
    <property type="nucleotide sequence ID" value="NC_004578.1"/>
</dbReference>
<dbReference type="SMR" id="Q88A97"/>
<dbReference type="STRING" id="223283.PSPTO_0495"/>
<dbReference type="GeneID" id="1182104"/>
<dbReference type="KEGG" id="pst:PSPTO_0495"/>
<dbReference type="PATRIC" id="fig|223283.9.peg.512"/>
<dbReference type="eggNOG" id="COG0156">
    <property type="taxonomic scope" value="Bacteria"/>
</dbReference>
<dbReference type="HOGENOM" id="CLU_015846_11_0_6"/>
<dbReference type="OrthoDB" id="9807157at2"/>
<dbReference type="PhylomeDB" id="Q88A97"/>
<dbReference type="UniPathway" id="UPA00078"/>
<dbReference type="Proteomes" id="UP000002515">
    <property type="component" value="Chromosome"/>
</dbReference>
<dbReference type="GO" id="GO:0008710">
    <property type="term" value="F:8-amino-7-oxononanoate synthase activity"/>
    <property type="evidence" value="ECO:0007669"/>
    <property type="project" value="UniProtKB-UniRule"/>
</dbReference>
<dbReference type="GO" id="GO:0030170">
    <property type="term" value="F:pyridoxal phosphate binding"/>
    <property type="evidence" value="ECO:0007669"/>
    <property type="project" value="UniProtKB-UniRule"/>
</dbReference>
<dbReference type="GO" id="GO:0009102">
    <property type="term" value="P:biotin biosynthetic process"/>
    <property type="evidence" value="ECO:0007669"/>
    <property type="project" value="UniProtKB-UniRule"/>
</dbReference>
<dbReference type="CDD" id="cd06454">
    <property type="entry name" value="KBL_like"/>
    <property type="match status" value="1"/>
</dbReference>
<dbReference type="Gene3D" id="3.90.1150.10">
    <property type="entry name" value="Aspartate Aminotransferase, domain 1"/>
    <property type="match status" value="1"/>
</dbReference>
<dbReference type="Gene3D" id="3.40.640.10">
    <property type="entry name" value="Type I PLP-dependent aspartate aminotransferase-like (Major domain)"/>
    <property type="match status" value="1"/>
</dbReference>
<dbReference type="HAMAP" id="MF_01693">
    <property type="entry name" value="BioF_aminotrans_2"/>
    <property type="match status" value="1"/>
</dbReference>
<dbReference type="InterPro" id="IPR001917">
    <property type="entry name" value="Aminotrans_II_pyridoxalP_BS"/>
</dbReference>
<dbReference type="InterPro" id="IPR004839">
    <property type="entry name" value="Aminotransferase_I/II_large"/>
</dbReference>
<dbReference type="InterPro" id="IPR050087">
    <property type="entry name" value="AON_synthase_class-II"/>
</dbReference>
<dbReference type="InterPro" id="IPR004723">
    <property type="entry name" value="AONS_Archaea/Proteobacteria"/>
</dbReference>
<dbReference type="InterPro" id="IPR022834">
    <property type="entry name" value="AONS_Proteobacteria"/>
</dbReference>
<dbReference type="InterPro" id="IPR015424">
    <property type="entry name" value="PyrdxlP-dep_Trfase"/>
</dbReference>
<dbReference type="InterPro" id="IPR015421">
    <property type="entry name" value="PyrdxlP-dep_Trfase_major"/>
</dbReference>
<dbReference type="InterPro" id="IPR015422">
    <property type="entry name" value="PyrdxlP-dep_Trfase_small"/>
</dbReference>
<dbReference type="NCBIfam" id="TIGR00858">
    <property type="entry name" value="bioF"/>
    <property type="match status" value="1"/>
</dbReference>
<dbReference type="PANTHER" id="PTHR13693:SF100">
    <property type="entry name" value="8-AMINO-7-OXONONANOATE SYNTHASE"/>
    <property type="match status" value="1"/>
</dbReference>
<dbReference type="PANTHER" id="PTHR13693">
    <property type="entry name" value="CLASS II AMINOTRANSFERASE/8-AMINO-7-OXONONANOATE SYNTHASE"/>
    <property type="match status" value="1"/>
</dbReference>
<dbReference type="Pfam" id="PF00155">
    <property type="entry name" value="Aminotran_1_2"/>
    <property type="match status" value="1"/>
</dbReference>
<dbReference type="SUPFAM" id="SSF53383">
    <property type="entry name" value="PLP-dependent transferases"/>
    <property type="match status" value="1"/>
</dbReference>
<dbReference type="PROSITE" id="PS00599">
    <property type="entry name" value="AA_TRANSFER_CLASS_2"/>
    <property type="match status" value="1"/>
</dbReference>
<sequence>MSFDLRTRLDARRTAHLYRQRPLLQSPQGPHVIVDGQPLLAFCNNDYMGLANHPEVIAAWQAGAERWGVGGGASHLVIGHSTPHHELEEALAELTGRPRALLFSNGYMANLGAVTALVGQGDTVLEDRLNHASLLDAGLLSGARFSRYLHNDAGSLNARLEKAVGDTLVVTDGVFSMDGDIADLPALAQAAKAKGAWLMVDDAHGFGPLGANGAGIVEHFGLSMEDVPVLVGTLGKSFGTSGAFVAGSEELIETLIQFARPYIYTTSQPPALACATLKSLQLLRSEHWRREHLASLIGQFRRGAEQLGLQLMDSFTPIQPIMIGDAGRALRLSQLLRERGLLVTAIRPPTVPAGSARLRVTLSAAHSEADVQLLLEALEQCYPLLDASESTEPVHA</sequence>
<name>BIOF_PSESM</name>
<evidence type="ECO:0000255" key="1">
    <source>
        <dbReference type="HAMAP-Rule" id="MF_01693"/>
    </source>
</evidence>
<organism>
    <name type="scientific">Pseudomonas syringae pv. tomato (strain ATCC BAA-871 / DC3000)</name>
    <dbReference type="NCBI Taxonomy" id="223283"/>
    <lineage>
        <taxon>Bacteria</taxon>
        <taxon>Pseudomonadati</taxon>
        <taxon>Pseudomonadota</taxon>
        <taxon>Gammaproteobacteria</taxon>
        <taxon>Pseudomonadales</taxon>
        <taxon>Pseudomonadaceae</taxon>
        <taxon>Pseudomonas</taxon>
    </lineage>
</organism>
<proteinExistence type="inferred from homology"/>
<accession>Q88A97</accession>
<feature type="chain" id="PRO_0000381083" description="8-amino-7-oxononanoate synthase">
    <location>
        <begin position="1"/>
        <end position="396"/>
    </location>
</feature>
<feature type="binding site" evidence="1">
    <location>
        <position position="19"/>
    </location>
    <ligand>
        <name>substrate</name>
    </ligand>
</feature>
<feature type="binding site" evidence="1">
    <location>
        <begin position="106"/>
        <end position="107"/>
    </location>
    <ligand>
        <name>pyridoxal 5'-phosphate</name>
        <dbReference type="ChEBI" id="CHEBI:597326"/>
    </ligand>
</feature>
<feature type="binding site" evidence="1">
    <location>
        <position position="131"/>
    </location>
    <ligand>
        <name>substrate</name>
    </ligand>
</feature>
<feature type="binding site" evidence="1">
    <location>
        <position position="176"/>
    </location>
    <ligand>
        <name>pyridoxal 5'-phosphate</name>
        <dbReference type="ChEBI" id="CHEBI:597326"/>
    </ligand>
</feature>
<feature type="binding site" evidence="1">
    <location>
        <position position="204"/>
    </location>
    <ligand>
        <name>pyridoxal 5'-phosphate</name>
        <dbReference type="ChEBI" id="CHEBI:597326"/>
    </ligand>
</feature>
<feature type="binding site" evidence="1">
    <location>
        <position position="233"/>
    </location>
    <ligand>
        <name>pyridoxal 5'-phosphate</name>
        <dbReference type="ChEBI" id="CHEBI:597326"/>
    </ligand>
</feature>
<feature type="binding site" evidence="1">
    <location>
        <position position="350"/>
    </location>
    <ligand>
        <name>substrate</name>
    </ligand>
</feature>
<feature type="modified residue" description="N6-(pyridoxal phosphate)lysine" evidence="1">
    <location>
        <position position="236"/>
    </location>
</feature>